<keyword id="KW-1003">Cell membrane</keyword>
<keyword id="KW-0297">G-protein coupled receptor</keyword>
<keyword id="KW-0472">Membrane</keyword>
<keyword id="KW-0597">Phosphoprotein</keyword>
<keyword id="KW-0675">Receptor</keyword>
<keyword id="KW-1185">Reference proteome</keyword>
<keyword id="KW-0807">Transducer</keyword>
<keyword id="KW-0812">Transmembrane</keyword>
<keyword id="KW-1133">Transmembrane helix</keyword>
<sequence>MITEGFPPNLNALKGSSLLEKRVDSLRQLNTTTVNQLLGLPGMTSTFTAPQLLQLRIIAITASAVSLIAGCLGMFFLSKMDKRRKVFRHDLIAFLIICDFLKAFILMIYPMIILINNSVYATPAFFNTLGWFTAFAIEGADMAIMIFAIHFAILIFKPNWKWRNKRSGNMEGGLYKKRSYIWPITALVPAILASLAFINYNKLNDDSDTTIILDNNNYNFPDSPRQGGYKPWSAWCYLPPKPYWYKIVLSWGPRYFIIIFIFAVYLSIYIFITSESKRIKAQIGDFNHNVLEEEKEKKKLFGLGHWGKAKWYFRSYFKLPLLHLLRNLKNFFTISFIDPNEETDDSGSSNGTFNFGESSNEIPTLFRKTNTGSDENVSASGGVRLLDYNSAKPLDMSKYAMSEQPDLERNNPFDCENDITLNPSELVSKQKEHKVTFSVENEGLDTRKSSMLGHQTFSCQNSLESPLAMYDNKNDNSDITSNIKEKGGIINNNSNNDDDDNNNNNDNDNDNNNSNNNNNNNNNNNNNNNNNNNNNNNNNNNNNNSNNIKNNVDNNNTNPADNIPTLSNEAFTPSQQFSQERVNNNADRCENSSFTNVQQHFQAQTYKQMKKRRAQIQKNLRAIFIYPLSYIGIWLFPIIADALQYNHEIKHGPTMWVTYIDTCVRPLSCLVDVIVYLFKEKPWNYSWAKTESKYLIEKYILKGELGEKEILKFCHSNWGKRGWYYRGKWKKRKCWKYSTNPLKRILWFVERFFKQLFELKLHFSFYDNCDDFEYWENYYSAKDSNDNKRTESDETKTNSSDRSLPSNSLELQAMLNNITAEEVEVPLFWRIIHHIPMLGGIDLDELNRLLKIRYNNDHFSLPGLKFALNQNKSHDKHQDVSTNSMVKSSFFSSNIVTNDDENSIEEDKNLRYSDASASENYLVKPTIPGTTPDPIIEAQNDNDSSDSSGIDLIAFLRNGPL</sequence>
<accession>Q12361</accession>
<accession>D6VRV9</accession>
<dbReference type="EMBL" id="Z74083">
    <property type="protein sequence ID" value="CAA98593.1"/>
    <property type="molecule type" value="Genomic_DNA"/>
</dbReference>
<dbReference type="EMBL" id="Z71781">
    <property type="protein sequence ID" value="CAA96454.1"/>
    <property type="molecule type" value="Genomic_DNA"/>
</dbReference>
<dbReference type="EMBL" id="BK006938">
    <property type="protein sequence ID" value="DAA11819.1"/>
    <property type="molecule type" value="Genomic_DNA"/>
</dbReference>
<dbReference type="PIR" id="JC5808">
    <property type="entry name" value="JC5808"/>
</dbReference>
<dbReference type="PIR" id="S67568">
    <property type="entry name" value="S67568"/>
</dbReference>
<dbReference type="RefSeq" id="NP_010249.1">
    <property type="nucleotide sequence ID" value="NM_001180094.1"/>
</dbReference>
<dbReference type="BioGRID" id="32023">
    <property type="interactions" value="693"/>
</dbReference>
<dbReference type="DIP" id="DIP-8949N"/>
<dbReference type="FunCoup" id="Q12361">
    <property type="interactions" value="236"/>
</dbReference>
<dbReference type="IntAct" id="Q12361">
    <property type="interactions" value="3"/>
</dbReference>
<dbReference type="MINT" id="Q12361"/>
<dbReference type="STRING" id="4932.YDL035C"/>
<dbReference type="TCDB" id="8.A.92.1.15">
    <property type="family name" value="the g-protein AlphaBetaGama complex (gpc) family"/>
</dbReference>
<dbReference type="GlyGen" id="Q12361">
    <property type="glycosylation" value="1 site"/>
</dbReference>
<dbReference type="iPTMnet" id="Q12361"/>
<dbReference type="PaxDb" id="4932-YDL035C"/>
<dbReference type="PeptideAtlas" id="Q12361"/>
<dbReference type="PRIDE" id="Q12361"/>
<dbReference type="EnsemblFungi" id="YDL035C_mRNA">
    <property type="protein sequence ID" value="YDL035C"/>
    <property type="gene ID" value="YDL035C"/>
</dbReference>
<dbReference type="GeneID" id="851527"/>
<dbReference type="KEGG" id="sce:YDL035C"/>
<dbReference type="AGR" id="SGD:S000002193"/>
<dbReference type="SGD" id="S000002193">
    <property type="gene designation" value="GPR1"/>
</dbReference>
<dbReference type="VEuPathDB" id="FungiDB:YDL035C"/>
<dbReference type="eggNOG" id="ENOG502QU8E">
    <property type="taxonomic scope" value="Eukaryota"/>
</dbReference>
<dbReference type="HOGENOM" id="CLU_314960_0_0_1"/>
<dbReference type="InParanoid" id="Q12361"/>
<dbReference type="OMA" id="NMEGGLY"/>
<dbReference type="OrthoDB" id="5368598at2759"/>
<dbReference type="BioCyc" id="YEAST:G3O-29459-MONOMER"/>
<dbReference type="BioGRID-ORCS" id="851527">
    <property type="hits" value="1 hit in 10 CRISPR screens"/>
</dbReference>
<dbReference type="PRO" id="PR:Q12361"/>
<dbReference type="Proteomes" id="UP000002311">
    <property type="component" value="Chromosome IV"/>
</dbReference>
<dbReference type="RNAct" id="Q12361">
    <property type="molecule type" value="protein"/>
</dbReference>
<dbReference type="GO" id="GO:0005886">
    <property type="term" value="C:plasma membrane"/>
    <property type="evidence" value="ECO:0000314"/>
    <property type="project" value="SGD"/>
</dbReference>
<dbReference type="GO" id="GO:0005536">
    <property type="term" value="F:D-glucose binding"/>
    <property type="evidence" value="ECO:0000315"/>
    <property type="project" value="SGD"/>
</dbReference>
<dbReference type="GO" id="GO:0004930">
    <property type="term" value="F:G protein-coupled receptor activity"/>
    <property type="evidence" value="ECO:0000315"/>
    <property type="project" value="SGD"/>
</dbReference>
<dbReference type="GO" id="GO:0007189">
    <property type="term" value="P:adenylate cyclase-activating G protein-coupled receptor signaling pathway"/>
    <property type="evidence" value="ECO:0000318"/>
    <property type="project" value="GO_Central"/>
</dbReference>
<dbReference type="GO" id="GO:0009731">
    <property type="term" value="P:detection of sucrose stimulus"/>
    <property type="evidence" value="ECO:0000315"/>
    <property type="project" value="SGD"/>
</dbReference>
<dbReference type="GO" id="GO:0007186">
    <property type="term" value="P:G protein-coupled receptor signaling pathway"/>
    <property type="evidence" value="ECO:0000315"/>
    <property type="project" value="SGD"/>
</dbReference>
<dbReference type="GO" id="GO:0010255">
    <property type="term" value="P:glucose mediated signaling pathway"/>
    <property type="evidence" value="ECO:0000315"/>
    <property type="project" value="SGD"/>
</dbReference>
<dbReference type="GO" id="GO:0009757">
    <property type="term" value="P:hexose mediated signaling"/>
    <property type="evidence" value="ECO:0000315"/>
    <property type="project" value="SGD"/>
</dbReference>
<dbReference type="GO" id="GO:0001403">
    <property type="term" value="P:invasive growth in response to glucose limitation"/>
    <property type="evidence" value="ECO:0000315"/>
    <property type="project" value="SGD"/>
</dbReference>
<dbReference type="GO" id="GO:0007124">
    <property type="term" value="P:pseudohyphal growth"/>
    <property type="evidence" value="ECO:0000315"/>
    <property type="project" value="SGD"/>
</dbReference>
<dbReference type="GO" id="GO:0009745">
    <property type="term" value="P:sucrose mediated signaling"/>
    <property type="evidence" value="ECO:0000315"/>
    <property type="project" value="SGD"/>
</dbReference>
<dbReference type="Gene3D" id="1.20.1070.10">
    <property type="entry name" value="Rhodopsin 7-helix transmembrane proteins"/>
    <property type="match status" value="1"/>
</dbReference>
<dbReference type="InterPro" id="IPR023041">
    <property type="entry name" value="Glucose_rcpt_Git3_N"/>
</dbReference>
<dbReference type="InterPro" id="IPR022596">
    <property type="entry name" value="GPR1_C"/>
</dbReference>
<dbReference type="PANTHER" id="PTHR23112">
    <property type="entry name" value="G PROTEIN-COUPLED RECEPTOR 157-RELATED"/>
    <property type="match status" value="1"/>
</dbReference>
<dbReference type="PANTHER" id="PTHR23112:SF37">
    <property type="entry name" value="G PROTEIN-COUPLED RECEPTOR GPR1"/>
    <property type="match status" value="1"/>
</dbReference>
<dbReference type="Pfam" id="PF11710">
    <property type="entry name" value="Git3"/>
    <property type="match status" value="1"/>
</dbReference>
<dbReference type="Pfam" id="PF11970">
    <property type="entry name" value="GPR_Gpa2_C"/>
    <property type="match status" value="1"/>
</dbReference>
<dbReference type="SUPFAM" id="SSF81321">
    <property type="entry name" value="Family A G protein-coupled receptor-like"/>
    <property type="match status" value="1"/>
</dbReference>
<gene>
    <name type="primary">GPR1</name>
    <name type="ordered locus">YDL035C</name>
</gene>
<protein>
    <recommendedName>
        <fullName>G protein-coupled receptor GPR1</fullName>
    </recommendedName>
</protein>
<reference key="1">
    <citation type="journal article" date="1998" name="EMBO J.">
        <title>GPR1 encodes a putative G protein-coupled receptor that associates with the Gpa2p Galpha subunit and functions in a Ras-independent pathway.</title>
        <authorList>
            <person name="Xue Y."/>
            <person name="Batlle M."/>
            <person name="Hirsch J.P."/>
        </authorList>
    </citation>
    <scope>NUCLEOTIDE SEQUENCE [GENOMIC DNA]</scope>
    <scope>SUBCELLULAR LOCATION</scope>
</reference>
<reference key="2">
    <citation type="journal article" date="1997" name="Yeast">
        <title>The sequence of a 36.7 kb segment on the left arm of chromosome IV from Saccharomyces cerevisiae reveals 20 non-overlapping open reading frames (ORFs) including SIT4, FAD1, NAM1, RNA11, SIR2, NAT1, PRP9, ACT2 and MPS1 and 11 new ORFs.</title>
        <authorList>
            <person name="Saren A.-M."/>
            <person name="Laamanen P."/>
            <person name="Lejarcegui J.B."/>
            <person name="Paulin L."/>
        </authorList>
    </citation>
    <scope>NUCLEOTIDE SEQUENCE [GENOMIC DNA]</scope>
    <source>
        <strain>ATCC 204508 / S288c</strain>
    </source>
</reference>
<reference key="3">
    <citation type="journal article" date="1997" name="Nature">
        <title>The nucleotide sequence of Saccharomyces cerevisiae chromosome IV.</title>
        <authorList>
            <person name="Jacq C."/>
            <person name="Alt-Moerbe J."/>
            <person name="Andre B."/>
            <person name="Arnold W."/>
            <person name="Bahr A."/>
            <person name="Ballesta J.P.G."/>
            <person name="Bargues M."/>
            <person name="Baron L."/>
            <person name="Becker A."/>
            <person name="Biteau N."/>
            <person name="Bloecker H."/>
            <person name="Blugeon C."/>
            <person name="Boskovic J."/>
            <person name="Brandt P."/>
            <person name="Brueckner M."/>
            <person name="Buitrago M.J."/>
            <person name="Coster F."/>
            <person name="Delaveau T."/>
            <person name="del Rey F."/>
            <person name="Dujon B."/>
            <person name="Eide L.G."/>
            <person name="Garcia-Cantalejo J.M."/>
            <person name="Goffeau A."/>
            <person name="Gomez-Peris A."/>
            <person name="Granotier C."/>
            <person name="Hanemann V."/>
            <person name="Hankeln T."/>
            <person name="Hoheisel J.D."/>
            <person name="Jaeger W."/>
            <person name="Jimenez A."/>
            <person name="Jonniaux J.-L."/>
            <person name="Kraemer C."/>
            <person name="Kuester H."/>
            <person name="Laamanen P."/>
            <person name="Legros Y."/>
            <person name="Louis E.J."/>
            <person name="Moeller-Rieker S."/>
            <person name="Monnet A."/>
            <person name="Moro M."/>
            <person name="Mueller-Auer S."/>
            <person name="Nussbaumer B."/>
            <person name="Paricio N."/>
            <person name="Paulin L."/>
            <person name="Perea J."/>
            <person name="Perez-Alonso M."/>
            <person name="Perez-Ortin J.E."/>
            <person name="Pohl T.M."/>
            <person name="Prydz H."/>
            <person name="Purnelle B."/>
            <person name="Rasmussen S.W."/>
            <person name="Remacha M.A."/>
            <person name="Revuelta J.L."/>
            <person name="Rieger M."/>
            <person name="Salom D."/>
            <person name="Saluz H.P."/>
            <person name="Saiz J.E."/>
            <person name="Saren A.-M."/>
            <person name="Schaefer M."/>
            <person name="Scharfe M."/>
            <person name="Schmidt E.R."/>
            <person name="Schneider C."/>
            <person name="Scholler P."/>
            <person name="Schwarz S."/>
            <person name="Soler-Mira A."/>
            <person name="Urrestarazu L.A."/>
            <person name="Verhasselt P."/>
            <person name="Vissers S."/>
            <person name="Voet M."/>
            <person name="Volckaert G."/>
            <person name="Wagner G."/>
            <person name="Wambutt R."/>
            <person name="Wedler E."/>
            <person name="Wedler H."/>
            <person name="Woelfl S."/>
            <person name="Harris D.E."/>
            <person name="Bowman S."/>
            <person name="Brown D."/>
            <person name="Churcher C.M."/>
            <person name="Connor R."/>
            <person name="Dedman K."/>
            <person name="Gentles S."/>
            <person name="Hamlin N."/>
            <person name="Hunt S."/>
            <person name="Jones L."/>
            <person name="McDonald S."/>
            <person name="Murphy L.D."/>
            <person name="Niblett D."/>
            <person name="Odell C."/>
            <person name="Oliver K."/>
            <person name="Rajandream M.A."/>
            <person name="Richards C."/>
            <person name="Shore L."/>
            <person name="Walsh S.V."/>
            <person name="Barrell B.G."/>
            <person name="Dietrich F.S."/>
            <person name="Mulligan J.T."/>
            <person name="Allen E."/>
            <person name="Araujo R."/>
            <person name="Aviles E."/>
            <person name="Berno A."/>
            <person name="Carpenter J."/>
            <person name="Chen E."/>
            <person name="Cherry J.M."/>
            <person name="Chung E."/>
            <person name="Duncan M."/>
            <person name="Hunicke-Smith S."/>
            <person name="Hyman R.W."/>
            <person name="Komp C."/>
            <person name="Lashkari D."/>
            <person name="Lew H."/>
            <person name="Lin D."/>
            <person name="Mosedale D."/>
            <person name="Nakahara K."/>
            <person name="Namath A."/>
            <person name="Oefner P."/>
            <person name="Oh C."/>
            <person name="Petel F.X."/>
            <person name="Roberts D."/>
            <person name="Schramm S."/>
            <person name="Schroeder M."/>
            <person name="Shogren T."/>
            <person name="Shroff N."/>
            <person name="Winant A."/>
            <person name="Yelton M.A."/>
            <person name="Botstein D."/>
            <person name="Davis R.W."/>
            <person name="Johnston M."/>
            <person name="Andrews S."/>
            <person name="Brinkman R."/>
            <person name="Cooper J."/>
            <person name="Ding H."/>
            <person name="Du Z."/>
            <person name="Favello A."/>
            <person name="Fulton L."/>
            <person name="Gattung S."/>
            <person name="Greco T."/>
            <person name="Hallsworth K."/>
            <person name="Hawkins J."/>
            <person name="Hillier L.W."/>
            <person name="Jier M."/>
            <person name="Johnson D."/>
            <person name="Johnston L."/>
            <person name="Kirsten J."/>
            <person name="Kucaba T."/>
            <person name="Langston Y."/>
            <person name="Latreille P."/>
            <person name="Le T."/>
            <person name="Mardis E."/>
            <person name="Menezes S."/>
            <person name="Miller N."/>
            <person name="Nhan M."/>
            <person name="Pauley A."/>
            <person name="Peluso D."/>
            <person name="Rifkin L."/>
            <person name="Riles L."/>
            <person name="Taich A."/>
            <person name="Trevaskis E."/>
            <person name="Vignati D."/>
            <person name="Wilcox L."/>
            <person name="Wohldman P."/>
            <person name="Vaudin M."/>
            <person name="Wilson R."/>
            <person name="Waterston R."/>
            <person name="Albermann K."/>
            <person name="Hani J."/>
            <person name="Heumann K."/>
            <person name="Kleine K."/>
            <person name="Mewes H.-W."/>
            <person name="Zollner A."/>
            <person name="Zaccaria P."/>
        </authorList>
    </citation>
    <scope>NUCLEOTIDE SEQUENCE [LARGE SCALE GENOMIC DNA]</scope>
    <source>
        <strain>ATCC 204508 / S288c</strain>
    </source>
</reference>
<reference key="4">
    <citation type="journal article" date="2014" name="G3 (Bethesda)">
        <title>The reference genome sequence of Saccharomyces cerevisiae: Then and now.</title>
        <authorList>
            <person name="Engel S.R."/>
            <person name="Dietrich F.S."/>
            <person name="Fisk D.G."/>
            <person name="Binkley G."/>
            <person name="Balakrishnan R."/>
            <person name="Costanzo M.C."/>
            <person name="Dwight S.S."/>
            <person name="Hitz B.C."/>
            <person name="Karra K."/>
            <person name="Nash R.S."/>
            <person name="Weng S."/>
            <person name="Wong E.D."/>
            <person name="Lloyd P."/>
            <person name="Skrzypek M.S."/>
            <person name="Miyasato S.R."/>
            <person name="Simison M."/>
            <person name="Cherry J.M."/>
        </authorList>
    </citation>
    <scope>GENOME REANNOTATION</scope>
    <source>
        <strain>ATCC 204508 / S288c</strain>
    </source>
</reference>
<reference key="5">
    <citation type="journal article" date="2006" name="Proc. Natl. Acad. Sci. U.S.A.">
        <title>A global topology map of the Saccharomyces cerevisiae membrane proteome.</title>
        <authorList>
            <person name="Kim H."/>
            <person name="Melen K."/>
            <person name="Oesterberg M."/>
            <person name="von Heijne G."/>
        </authorList>
    </citation>
    <scope>TOPOLOGY [LARGE SCALE ANALYSIS]</scope>
    <source>
        <strain>ATCC 208353 / W303-1A</strain>
    </source>
</reference>
<reference key="6">
    <citation type="journal article" date="2007" name="J. Proteome Res.">
        <title>Large-scale phosphorylation analysis of alpha-factor-arrested Saccharomyces cerevisiae.</title>
        <authorList>
            <person name="Li X."/>
            <person name="Gerber S.A."/>
            <person name="Rudner A.D."/>
            <person name="Beausoleil S.A."/>
            <person name="Haas W."/>
            <person name="Villen J."/>
            <person name="Elias J.E."/>
            <person name="Gygi S.P."/>
        </authorList>
    </citation>
    <scope>PHOSPHORYLATION [LARGE SCALE ANALYSIS] AT SER-903</scope>
    <scope>IDENTIFICATION BY MASS SPECTROMETRY [LARGE SCALE ANALYSIS]</scope>
    <source>
        <strain>ADR376</strain>
    </source>
</reference>
<reference key="7">
    <citation type="journal article" date="2008" name="Mol. Cell. Proteomics">
        <title>A multidimensional chromatography technology for in-depth phosphoproteome analysis.</title>
        <authorList>
            <person name="Albuquerque C.P."/>
            <person name="Smolka M.B."/>
            <person name="Payne S.H."/>
            <person name="Bafna V."/>
            <person name="Eng J."/>
            <person name="Zhou H."/>
        </authorList>
    </citation>
    <scope>PHOSPHORYLATION [LARGE SCALE ANALYSIS] AT SER-903</scope>
    <scope>IDENTIFICATION BY MASS SPECTROMETRY [LARGE SCALE ANALYSIS]</scope>
</reference>
<reference key="8">
    <citation type="journal article" date="2009" name="Science">
        <title>Global analysis of Cdk1 substrate phosphorylation sites provides insights into evolution.</title>
        <authorList>
            <person name="Holt L.J."/>
            <person name="Tuch B.B."/>
            <person name="Villen J."/>
            <person name="Johnson A.D."/>
            <person name="Gygi S.P."/>
            <person name="Morgan D.O."/>
        </authorList>
    </citation>
    <scope>PHOSPHORYLATION [LARGE SCALE ANALYSIS] AT SER-373</scope>
    <scope>IDENTIFICATION BY MASS SPECTROMETRY [LARGE SCALE ANALYSIS]</scope>
</reference>
<feature type="chain" id="PRO_0000195084" description="G protein-coupled receptor GPR1">
    <location>
        <begin position="1"/>
        <end position="961"/>
    </location>
</feature>
<feature type="topological domain" description="Extracellular" evidence="1">
    <location>
        <begin position="1"/>
        <end position="56"/>
    </location>
</feature>
<feature type="transmembrane region" description="Helical; Name=1" evidence="1">
    <location>
        <begin position="57"/>
        <end position="79"/>
    </location>
</feature>
<feature type="topological domain" description="Cytoplasmic" evidence="1">
    <location>
        <begin position="80"/>
        <end position="91"/>
    </location>
</feature>
<feature type="transmembrane region" description="Helical; Name=2" evidence="1">
    <location>
        <begin position="92"/>
        <end position="114"/>
    </location>
</feature>
<feature type="topological domain" description="Extracellular" evidence="1">
    <location>
        <begin position="115"/>
        <end position="133"/>
    </location>
</feature>
<feature type="transmembrane region" description="Helical; Name=3" evidence="1">
    <location>
        <begin position="134"/>
        <end position="156"/>
    </location>
</feature>
<feature type="topological domain" description="Cytoplasmic" evidence="1">
    <location>
        <begin position="157"/>
        <end position="178"/>
    </location>
</feature>
<feature type="transmembrane region" description="Helical; Name=4" evidence="1">
    <location>
        <begin position="179"/>
        <end position="198"/>
    </location>
</feature>
<feature type="topological domain" description="Extracellular" evidence="1">
    <location>
        <begin position="199"/>
        <end position="250"/>
    </location>
</feature>
<feature type="transmembrane region" description="Helical; Name=5" evidence="1">
    <location>
        <begin position="251"/>
        <end position="273"/>
    </location>
</feature>
<feature type="topological domain" description="Cytoplasmic" evidence="1">
    <location>
        <begin position="274"/>
        <end position="619"/>
    </location>
</feature>
<feature type="transmembrane region" description="Helical; Name=6" evidence="1">
    <location>
        <begin position="620"/>
        <end position="642"/>
    </location>
</feature>
<feature type="topological domain" description="Extracellular" evidence="1">
    <location>
        <begin position="643"/>
        <end position="822"/>
    </location>
</feature>
<feature type="transmembrane region" description="Helical; Name=7" evidence="1">
    <location>
        <begin position="823"/>
        <end position="843"/>
    </location>
</feature>
<feature type="topological domain" description="Cytoplasmic" evidence="1">
    <location>
        <begin position="844"/>
        <end position="961"/>
    </location>
</feature>
<feature type="region of interest" description="Disordered" evidence="2">
    <location>
        <begin position="468"/>
        <end position="568"/>
    </location>
</feature>
<feature type="region of interest" description="Disordered" evidence="2">
    <location>
        <begin position="783"/>
        <end position="805"/>
    </location>
</feature>
<feature type="compositionally biased region" description="Low complexity" evidence="2">
    <location>
        <begin position="502"/>
        <end position="558"/>
    </location>
</feature>
<feature type="compositionally biased region" description="Basic and acidic residues" evidence="2">
    <location>
        <begin position="783"/>
        <end position="796"/>
    </location>
</feature>
<feature type="modified residue" description="Phosphoserine" evidence="7">
    <location>
        <position position="373"/>
    </location>
</feature>
<feature type="modified residue" description="Phosphoserine" evidence="5 6">
    <location>
        <position position="903"/>
    </location>
</feature>
<proteinExistence type="evidence at protein level"/>
<organism>
    <name type="scientific">Saccharomyces cerevisiae (strain ATCC 204508 / S288c)</name>
    <name type="common">Baker's yeast</name>
    <dbReference type="NCBI Taxonomy" id="559292"/>
    <lineage>
        <taxon>Eukaryota</taxon>
        <taxon>Fungi</taxon>
        <taxon>Dikarya</taxon>
        <taxon>Ascomycota</taxon>
        <taxon>Saccharomycotina</taxon>
        <taxon>Saccharomycetes</taxon>
        <taxon>Saccharomycetales</taxon>
        <taxon>Saccharomycetaceae</taxon>
        <taxon>Saccharomyces</taxon>
    </lineage>
</organism>
<evidence type="ECO:0000255" key="1"/>
<evidence type="ECO:0000256" key="2">
    <source>
        <dbReference type="SAM" id="MobiDB-lite"/>
    </source>
</evidence>
<evidence type="ECO:0000269" key="3">
    <source>
    </source>
</evidence>
<evidence type="ECO:0000305" key="4"/>
<evidence type="ECO:0007744" key="5">
    <source>
    </source>
</evidence>
<evidence type="ECO:0007744" key="6">
    <source>
    </source>
</evidence>
<evidence type="ECO:0007744" key="7">
    <source>
    </source>
</evidence>
<comment type="function">
    <text>Seems to associate with GPA2 and act as G protein-coupled receptor that senses glucose and controls filamentous growth. It acts upstream of adenylate cyclase and is required for glucose activation of cAMP synthesis in concert with a glucose phosphorylation-dependent mechanism.</text>
</comment>
<comment type="subcellular location">
    <subcellularLocation>
        <location evidence="3">Cell membrane</location>
        <topology evidence="3">Multi-pass membrane protein</topology>
    </subcellularLocation>
</comment>
<comment type="similarity">
    <text evidence="4">Belongs to the G-protein coupled receptor GPR1/git3 family.</text>
</comment>
<name>GPR1_YEAST</name>